<comment type="function">
    <text evidence="7 9">Helicase. Component of the SWI/SNF complex, an ATP-dependent chromatin remodeling complex, required for the positive and negative regulation of gene expression of a large number of genes. It changes chromatin structure by altering DNA-histone contacts within a nucleosome, leading eventually to a change in nucleosome position, thus facilitating or repressing binding of gene-specific transcription factors.</text>
</comment>
<comment type="subunit">
    <text evidence="9">Component of the SWI/SNF global transcription activator complex composed of at least arp9, arp42, snf5, snf22, snf30, sbf59, sol1, ssr1, ssr2, ssr3, ssr4 and tfg3.</text>
</comment>
<comment type="subcellular location">
    <subcellularLocation>
        <location evidence="4 8">Nucleus</location>
    </subcellularLocation>
</comment>
<comment type="similarity">
    <text evidence="10">Belongs to the SNF2/RAD54 helicase family.</text>
</comment>
<gene>
    <name type="primary">snf22</name>
    <name type="ORF">SPCC1620.14c</name>
    <name type="ORF">SPCC830.01c</name>
</gene>
<protein>
    <recommendedName>
        <fullName>SWI/SNF chromatin-remodeling complex subunit snf22</fullName>
        <ecNumber>3.6.4.-</ecNumber>
    </recommendedName>
    <alternativeName>
        <fullName>ATP-dependent helicase snf22</fullName>
    </alternativeName>
    <alternativeName>
        <fullName>SWI/SNF complex subunit snf22</fullName>
    </alternativeName>
</protein>
<dbReference type="EC" id="3.6.4.-"/>
<dbReference type="EMBL" id="AB162437">
    <property type="protein sequence ID" value="BAD11104.1"/>
    <property type="molecule type" value="Genomic_DNA"/>
</dbReference>
<dbReference type="EMBL" id="CU329672">
    <property type="protein sequence ID" value="CAA22498.2"/>
    <property type="molecule type" value="Genomic_DNA"/>
</dbReference>
<dbReference type="PIR" id="T41628">
    <property type="entry name" value="T41628"/>
</dbReference>
<dbReference type="RefSeq" id="NP_588472.2">
    <property type="nucleotide sequence ID" value="NM_001023463.2"/>
</dbReference>
<dbReference type="SMR" id="O94421"/>
<dbReference type="BioGRID" id="275460">
    <property type="interactions" value="21"/>
</dbReference>
<dbReference type="ComplexPortal" id="CPX-6362">
    <property type="entry name" value="SWI/SNF chromatin remodelling complex"/>
</dbReference>
<dbReference type="DIP" id="DIP-48377N"/>
<dbReference type="FunCoup" id="O94421">
    <property type="interactions" value="883"/>
</dbReference>
<dbReference type="IntAct" id="O94421">
    <property type="interactions" value="11"/>
</dbReference>
<dbReference type="STRING" id="284812.O94421"/>
<dbReference type="iPTMnet" id="O94421"/>
<dbReference type="PaxDb" id="4896-SPCC1620.14c.1"/>
<dbReference type="EnsemblFungi" id="SPCC1620.14c.1">
    <property type="protein sequence ID" value="SPCC1620.14c.1:pep"/>
    <property type="gene ID" value="SPCC1620.14c"/>
</dbReference>
<dbReference type="GeneID" id="2538881"/>
<dbReference type="KEGG" id="spo:2538881"/>
<dbReference type="PomBase" id="SPCC1620.14c">
    <property type="gene designation" value="snf22"/>
</dbReference>
<dbReference type="VEuPathDB" id="FungiDB:SPCC1620.14c"/>
<dbReference type="eggNOG" id="KOG0386">
    <property type="taxonomic scope" value="Eukaryota"/>
</dbReference>
<dbReference type="HOGENOM" id="CLU_000315_15_3_1"/>
<dbReference type="InParanoid" id="O94421"/>
<dbReference type="OMA" id="MIELRCL"/>
<dbReference type="PhylomeDB" id="O94421"/>
<dbReference type="Reactome" id="R-SPO-3214858">
    <property type="pathway name" value="RMTs methylate histone arginines"/>
</dbReference>
<dbReference type="PRO" id="PR:O94421"/>
<dbReference type="Proteomes" id="UP000002485">
    <property type="component" value="Chromosome III"/>
</dbReference>
<dbReference type="GO" id="GO:0000785">
    <property type="term" value="C:chromatin"/>
    <property type="evidence" value="ECO:0000314"/>
    <property type="project" value="PomBase"/>
</dbReference>
<dbReference type="GO" id="GO:0072686">
    <property type="term" value="C:mitotic spindle"/>
    <property type="evidence" value="ECO:0007005"/>
    <property type="project" value="PomBase"/>
</dbReference>
<dbReference type="GO" id="GO:0005634">
    <property type="term" value="C:nucleus"/>
    <property type="evidence" value="ECO:0007005"/>
    <property type="project" value="PomBase"/>
</dbReference>
<dbReference type="GO" id="GO:0016514">
    <property type="term" value="C:SWI/SNF complex"/>
    <property type="evidence" value="ECO:0000314"/>
    <property type="project" value="PomBase"/>
</dbReference>
<dbReference type="GO" id="GO:0005524">
    <property type="term" value="F:ATP binding"/>
    <property type="evidence" value="ECO:0000305"/>
    <property type="project" value="PomBase"/>
</dbReference>
<dbReference type="GO" id="GO:0016887">
    <property type="term" value="F:ATP hydrolysis activity"/>
    <property type="evidence" value="ECO:0000305"/>
    <property type="project" value="PomBase"/>
</dbReference>
<dbReference type="GO" id="GO:0003682">
    <property type="term" value="F:chromatin binding"/>
    <property type="evidence" value="ECO:0000318"/>
    <property type="project" value="GO_Central"/>
</dbReference>
<dbReference type="GO" id="GO:0003677">
    <property type="term" value="F:DNA binding"/>
    <property type="evidence" value="ECO:0000318"/>
    <property type="project" value="GO_Central"/>
</dbReference>
<dbReference type="GO" id="GO:0004386">
    <property type="term" value="F:helicase activity"/>
    <property type="evidence" value="ECO:0007669"/>
    <property type="project" value="UniProtKB-KW"/>
</dbReference>
<dbReference type="GO" id="GO:0042393">
    <property type="term" value="F:histone binding"/>
    <property type="evidence" value="ECO:0007669"/>
    <property type="project" value="InterPro"/>
</dbReference>
<dbReference type="GO" id="GO:0140750">
    <property type="term" value="F:nucleosome array spacer activity"/>
    <property type="evidence" value="ECO:0000318"/>
    <property type="project" value="GO_Central"/>
</dbReference>
<dbReference type="GO" id="GO:0006338">
    <property type="term" value="P:chromatin remodeling"/>
    <property type="evidence" value="ECO:0000303"/>
    <property type="project" value="ComplexPortal"/>
</dbReference>
<dbReference type="GO" id="GO:0045944">
    <property type="term" value="P:positive regulation of transcription by RNA polymerase II"/>
    <property type="evidence" value="ECO:0000318"/>
    <property type="project" value="GO_Central"/>
</dbReference>
<dbReference type="GO" id="GO:0006357">
    <property type="term" value="P:regulation of transcription by RNA polymerase II"/>
    <property type="evidence" value="ECO:0000303"/>
    <property type="project" value="ComplexPortal"/>
</dbReference>
<dbReference type="GO" id="GO:0045815">
    <property type="term" value="P:transcription initiation-coupled chromatin remodeling"/>
    <property type="evidence" value="ECO:0000315"/>
    <property type="project" value="PomBase"/>
</dbReference>
<dbReference type="CDD" id="cd05519">
    <property type="entry name" value="Bromo_SNF2"/>
    <property type="match status" value="1"/>
</dbReference>
<dbReference type="CDD" id="cd17996">
    <property type="entry name" value="DEXHc_SMARCA2_SMARCA4"/>
    <property type="match status" value="1"/>
</dbReference>
<dbReference type="CDD" id="cd18793">
    <property type="entry name" value="SF2_C_SNF"/>
    <property type="match status" value="1"/>
</dbReference>
<dbReference type="FunFam" id="3.40.50.10810:FF:000008">
    <property type="entry name" value="Chromatin structure-remodeling complex subunit snf21"/>
    <property type="match status" value="1"/>
</dbReference>
<dbReference type="FunFam" id="3.40.50.300:FF:000843">
    <property type="entry name" value="Chromatin structure-remodeling complex subunit snf21"/>
    <property type="match status" value="1"/>
</dbReference>
<dbReference type="Gene3D" id="1.20.5.170">
    <property type="match status" value="1"/>
</dbReference>
<dbReference type="Gene3D" id="1.20.920.10">
    <property type="entry name" value="Bromodomain-like"/>
    <property type="match status" value="1"/>
</dbReference>
<dbReference type="Gene3D" id="3.40.50.300">
    <property type="entry name" value="P-loop containing nucleotide triphosphate hydrolases"/>
    <property type="match status" value="1"/>
</dbReference>
<dbReference type="Gene3D" id="3.40.50.10810">
    <property type="entry name" value="Tandem AAA-ATPase domain"/>
    <property type="match status" value="1"/>
</dbReference>
<dbReference type="InterPro" id="IPR001487">
    <property type="entry name" value="Bromodomain"/>
</dbReference>
<dbReference type="InterPro" id="IPR036427">
    <property type="entry name" value="Bromodomain-like_sf"/>
</dbReference>
<dbReference type="InterPro" id="IPR018359">
    <property type="entry name" value="Bromodomain_CS"/>
</dbReference>
<dbReference type="InterPro" id="IPR014978">
    <property type="entry name" value="Gln-Leu-Gln_QLQ"/>
</dbReference>
<dbReference type="InterPro" id="IPR014001">
    <property type="entry name" value="Helicase_ATP-bd"/>
</dbReference>
<dbReference type="InterPro" id="IPR001650">
    <property type="entry name" value="Helicase_C-like"/>
</dbReference>
<dbReference type="InterPro" id="IPR014012">
    <property type="entry name" value="HSA_dom"/>
</dbReference>
<dbReference type="InterPro" id="IPR027417">
    <property type="entry name" value="P-loop_NTPase"/>
</dbReference>
<dbReference type="InterPro" id="IPR029295">
    <property type="entry name" value="SnAC"/>
</dbReference>
<dbReference type="InterPro" id="IPR038718">
    <property type="entry name" value="SNF2-like_sf"/>
</dbReference>
<dbReference type="InterPro" id="IPR049730">
    <property type="entry name" value="SNF2/RAD54-like_C"/>
</dbReference>
<dbReference type="InterPro" id="IPR000330">
    <property type="entry name" value="SNF2_N"/>
</dbReference>
<dbReference type="PANTHER" id="PTHR10799">
    <property type="entry name" value="SNF2/RAD54 HELICASE FAMILY"/>
    <property type="match status" value="1"/>
</dbReference>
<dbReference type="Pfam" id="PF00439">
    <property type="entry name" value="Bromodomain"/>
    <property type="match status" value="1"/>
</dbReference>
<dbReference type="Pfam" id="PF00271">
    <property type="entry name" value="Helicase_C"/>
    <property type="match status" value="1"/>
</dbReference>
<dbReference type="Pfam" id="PF08880">
    <property type="entry name" value="QLQ"/>
    <property type="match status" value="1"/>
</dbReference>
<dbReference type="Pfam" id="PF14619">
    <property type="entry name" value="SnAC"/>
    <property type="match status" value="1"/>
</dbReference>
<dbReference type="Pfam" id="PF00176">
    <property type="entry name" value="SNF2-rel_dom"/>
    <property type="match status" value="1"/>
</dbReference>
<dbReference type="PRINTS" id="PR00503">
    <property type="entry name" value="BROMODOMAIN"/>
</dbReference>
<dbReference type="SMART" id="SM00297">
    <property type="entry name" value="BROMO"/>
    <property type="match status" value="1"/>
</dbReference>
<dbReference type="SMART" id="SM00487">
    <property type="entry name" value="DEXDc"/>
    <property type="match status" value="1"/>
</dbReference>
<dbReference type="SMART" id="SM00490">
    <property type="entry name" value="HELICc"/>
    <property type="match status" value="1"/>
</dbReference>
<dbReference type="SMART" id="SM00951">
    <property type="entry name" value="QLQ"/>
    <property type="match status" value="1"/>
</dbReference>
<dbReference type="SMART" id="SM01314">
    <property type="entry name" value="SnAC"/>
    <property type="match status" value="1"/>
</dbReference>
<dbReference type="SUPFAM" id="SSF47370">
    <property type="entry name" value="Bromodomain"/>
    <property type="match status" value="1"/>
</dbReference>
<dbReference type="SUPFAM" id="SSF52540">
    <property type="entry name" value="P-loop containing nucleoside triphosphate hydrolases"/>
    <property type="match status" value="2"/>
</dbReference>
<dbReference type="PROSITE" id="PS00633">
    <property type="entry name" value="BROMODOMAIN_1"/>
    <property type="match status" value="1"/>
</dbReference>
<dbReference type="PROSITE" id="PS50014">
    <property type="entry name" value="BROMODOMAIN_2"/>
    <property type="match status" value="1"/>
</dbReference>
<dbReference type="PROSITE" id="PS51192">
    <property type="entry name" value="HELICASE_ATP_BIND_1"/>
    <property type="match status" value="1"/>
</dbReference>
<dbReference type="PROSITE" id="PS51194">
    <property type="entry name" value="HELICASE_CTER"/>
    <property type="match status" value="1"/>
</dbReference>
<dbReference type="PROSITE" id="PS51204">
    <property type="entry name" value="HSA"/>
    <property type="match status" value="1"/>
</dbReference>
<dbReference type="PROSITE" id="PS51666">
    <property type="entry name" value="QLQ"/>
    <property type="match status" value="1"/>
</dbReference>
<feature type="chain" id="PRO_0000074360" description="SWI/SNF chromatin-remodeling complex subunit snf22">
    <location>
        <begin position="1"/>
        <end position="1680"/>
    </location>
</feature>
<feature type="domain" description="QLQ" evidence="5">
    <location>
        <begin position="429"/>
        <end position="465"/>
    </location>
</feature>
<feature type="domain" description="HSA" evidence="4">
    <location>
        <begin position="704"/>
        <end position="776"/>
    </location>
</feature>
<feature type="domain" description="Helicase ATP-binding" evidence="2">
    <location>
        <begin position="881"/>
        <end position="1046"/>
    </location>
</feature>
<feature type="domain" description="Helicase C-terminal" evidence="3">
    <location>
        <begin position="1191"/>
        <end position="1354"/>
    </location>
</feature>
<feature type="domain" description="Bromo" evidence="1">
    <location>
        <begin position="1513"/>
        <end position="1623"/>
    </location>
</feature>
<feature type="region of interest" description="Disordered" evidence="6">
    <location>
        <begin position="61"/>
        <end position="135"/>
    </location>
</feature>
<feature type="region of interest" description="Disordered" evidence="6">
    <location>
        <begin position="203"/>
        <end position="258"/>
    </location>
</feature>
<feature type="region of interest" description="Disordered" evidence="6">
    <location>
        <begin position="274"/>
        <end position="300"/>
    </location>
</feature>
<feature type="region of interest" description="Disordered" evidence="6">
    <location>
        <begin position="367"/>
        <end position="427"/>
    </location>
</feature>
<feature type="region of interest" description="Disordered" evidence="6">
    <location>
        <begin position="477"/>
        <end position="499"/>
    </location>
</feature>
<feature type="region of interest" description="Disordered" evidence="6">
    <location>
        <begin position="817"/>
        <end position="836"/>
    </location>
</feature>
<feature type="region of interest" description="Disordered" evidence="6">
    <location>
        <begin position="1466"/>
        <end position="1511"/>
    </location>
</feature>
<feature type="short sequence motif" description="DEGH box">
    <location>
        <begin position="996"/>
        <end position="999"/>
    </location>
</feature>
<feature type="compositionally biased region" description="Polar residues" evidence="6">
    <location>
        <begin position="62"/>
        <end position="91"/>
    </location>
</feature>
<feature type="compositionally biased region" description="Low complexity" evidence="6">
    <location>
        <begin position="118"/>
        <end position="127"/>
    </location>
</feature>
<feature type="compositionally biased region" description="Low complexity" evidence="6">
    <location>
        <begin position="222"/>
        <end position="233"/>
    </location>
</feature>
<feature type="compositionally biased region" description="Polar residues" evidence="6">
    <location>
        <begin position="234"/>
        <end position="245"/>
    </location>
</feature>
<feature type="compositionally biased region" description="Low complexity" evidence="6">
    <location>
        <begin position="247"/>
        <end position="258"/>
    </location>
</feature>
<feature type="compositionally biased region" description="Low complexity" evidence="6">
    <location>
        <begin position="282"/>
        <end position="299"/>
    </location>
</feature>
<feature type="compositionally biased region" description="Low complexity" evidence="6">
    <location>
        <begin position="374"/>
        <end position="392"/>
    </location>
</feature>
<feature type="compositionally biased region" description="Polar residues" evidence="6">
    <location>
        <begin position="406"/>
        <end position="419"/>
    </location>
</feature>
<feature type="compositionally biased region" description="Polar residues" evidence="6">
    <location>
        <begin position="477"/>
        <end position="489"/>
    </location>
</feature>
<feature type="compositionally biased region" description="Basic and acidic residues" evidence="6">
    <location>
        <begin position="490"/>
        <end position="499"/>
    </location>
</feature>
<feature type="compositionally biased region" description="Polar residues" evidence="6">
    <location>
        <begin position="817"/>
        <end position="832"/>
    </location>
</feature>
<feature type="compositionally biased region" description="Basic residues" evidence="6">
    <location>
        <begin position="1476"/>
        <end position="1486"/>
    </location>
</feature>
<feature type="compositionally biased region" description="Low complexity" evidence="6">
    <location>
        <begin position="1488"/>
        <end position="1502"/>
    </location>
</feature>
<feature type="binding site" evidence="2">
    <location>
        <begin position="894"/>
        <end position="901"/>
    </location>
    <ligand>
        <name>ATP</name>
        <dbReference type="ChEBI" id="CHEBI:30616"/>
    </ligand>
</feature>
<keyword id="KW-0067">ATP-binding</keyword>
<keyword id="KW-0103">Bromodomain</keyword>
<keyword id="KW-0156">Chromatin regulator</keyword>
<keyword id="KW-0347">Helicase</keyword>
<keyword id="KW-0378">Hydrolase</keyword>
<keyword id="KW-0547">Nucleotide-binding</keyword>
<keyword id="KW-0539">Nucleus</keyword>
<keyword id="KW-1185">Reference proteome</keyword>
<keyword id="KW-0804">Transcription</keyword>
<keyword id="KW-0805">Transcription regulation</keyword>
<organism>
    <name type="scientific">Schizosaccharomyces pombe (strain 972 / ATCC 24843)</name>
    <name type="common">Fission yeast</name>
    <dbReference type="NCBI Taxonomy" id="284812"/>
    <lineage>
        <taxon>Eukaryota</taxon>
        <taxon>Fungi</taxon>
        <taxon>Dikarya</taxon>
        <taxon>Ascomycota</taxon>
        <taxon>Taphrinomycotina</taxon>
        <taxon>Schizosaccharomycetes</taxon>
        <taxon>Schizosaccharomycetales</taxon>
        <taxon>Schizosaccharomycetaceae</taxon>
        <taxon>Schizosaccharomyces</taxon>
    </lineage>
</organism>
<sequence>MFAVQGNQKFPKGLTKDNIQSLYQQWQVMRNQGATEENNPEFAQISSILRMVQRAHYARMQQMRNQSSEFPDAENTNLRKQQDTLPTTGFNNLPEGKAGMQTLPGRPASNGPTPPNPGNGNVGLNNPSYMNSQASPNIMNAPLQRDTSVPPAPSMVHPHTNTNANSNNLKVYANQLSQQNTSNPTYHNAYDMASMMKNGSRMNNSFPPTTPYPPANDTTVNSSLPHSFASPSSTFEQPHTVQSRAPSVDTTSSSHSFSARNIPANVSMQQQMGRRGSIPVNPSTFSASSPPSGSMLASPYNGYQNDAASFAHSKLPSSANPNTPFNSTATVDVGAAGSHFPYPQPSNLDAINAKTYFQSSSNSPAPYVYRNNLPPSATSFQPSSSRSPSVDPNTVKSAQHIPRMSPSPSASALKTQSHVPSAKVPPTSKLNHAQLAMLKSQIVAYNCLNSPNGQVPPAVQQAIFGRVYGASNEVSPSMPFQQNVPQMSSVKKDTPTRDANMRTSKAPYIQNIPNQFQRRAYSATIPVKNESLAKPSVSPMPLQQSTGKTEVAKRAQFPTNVNYSSCVDPRTYVKTPIPFSKFSSSENLSLIPSLLPPSISWDDVFLSSEIAIACSIANRIDFLEKENRPKSVNKKILQQDKSKSMIELRCLRLLEKQRSLRETINSVIPHSDSLAAGNLRLMFRNVKRQTMQEANLVLALAEKQKTEHAMRQKEKLLTHLRSIMLHRKSIVTKVDKQNKAKTQRCKDIINFHAHLEKEEKKRIERSARQRLQALRADDEAAYLQLLDKAKDTRITHLLKQTDQYLENLTRAVRIQQSNIHSGNTSGKGSNSAELEAPISEEDKNLDYFKVAHRIHEEVEQPKIFVGGTLKDYQLKGLEWMLSLYNNNLNGILADEMGLGKTIQTIAFITYLIEKKNQQGPFLIIVPLSTLTNWIMEFEKWAPSVKKIAYKGPPQLRKTLQSQIRSSNFNVLLTTFEYIIKDRPLLSRIKWVHMIIDEGHRIKNTQSKLTSTLSTYYHSQYRLILTGTPLQNNLPELWALLNFVLPKIFNSIKSFDEWFNTPFANTGGQDKIGLNEEEALLIIKRLHKVLRPFLFRRLKKDVEKELPDKVEKVIKCPLSGLQLKLYQQMKKHGMLFVDGEKGKTGIKGLQNTVMQLKKICNHPFIFEDVERAIDPSGTNVDLLWRAAGKFELLDRILPKLFLTGHKTLMFFQMTQIMTIMEDYLRSKNWKYLRLDGSTKSDDRCSLLAQFNDPKSDVYIFMLSTRAGGLGLNLQTADTVIIFDTDWNPHQDLQAQDRAHRIGQTKEVRILRLITEKSIEENILSRAQYKLDLDGKVIQAGKFDNKSTPEEREAFLRSLLEHDGDDDHDLTYGELQDDELNELISRTDEELVLFKKLDKERAATDIYGKGKPLERLLTVNELPDFYKVEVDSFAVQSSSELEDQYLERKRRRRNSISYTELTLDELNTVDDPSSTLMPRKRGRPRKKTNSGSSLSTPLSQESSLARSGRKNTPSYKQKALRRYCMEIFERLYNLQSEDGRFVNGLFLYPPNRKLYPDYYIIIKRPIALGKIKRNIKNDRYGDVGELIADFMLMFNNAYTYNEEHSIVYEDAKLMEKTLKEVIEDLEKNNSLHAYEEEALNEEQASLVFLENSEAELPLDSGIVSAEDDKVITYEDSSSSYSE</sequence>
<evidence type="ECO:0000255" key="1">
    <source>
        <dbReference type="PROSITE-ProRule" id="PRU00035"/>
    </source>
</evidence>
<evidence type="ECO:0000255" key="2">
    <source>
        <dbReference type="PROSITE-ProRule" id="PRU00541"/>
    </source>
</evidence>
<evidence type="ECO:0000255" key="3">
    <source>
        <dbReference type="PROSITE-ProRule" id="PRU00542"/>
    </source>
</evidence>
<evidence type="ECO:0000255" key="4">
    <source>
        <dbReference type="PROSITE-ProRule" id="PRU00549"/>
    </source>
</evidence>
<evidence type="ECO:0000255" key="5">
    <source>
        <dbReference type="PROSITE-ProRule" id="PRU01001"/>
    </source>
</evidence>
<evidence type="ECO:0000256" key="6">
    <source>
        <dbReference type="SAM" id="MobiDB-lite"/>
    </source>
</evidence>
<evidence type="ECO:0000269" key="7">
    <source>
    </source>
</evidence>
<evidence type="ECO:0000269" key="8">
    <source>
    </source>
</evidence>
<evidence type="ECO:0000269" key="9">
    <source>
    </source>
</evidence>
<evidence type="ECO:0000305" key="10"/>
<accession>O94421</accession>
<accession>Q9UU97</accession>
<reference key="1">
    <citation type="journal article" date="2004" name="EMBO J.">
        <title>Roles of histone acetylation and chromatin remodeling factor in a meiotic recombination hotspot.</title>
        <authorList>
            <person name="Yamada T."/>
            <person name="Mizuno K."/>
            <person name="Hirota K."/>
            <person name="Kon N."/>
            <person name="Wahls W.P."/>
            <person name="Hartsuiker E."/>
            <person name="Murofushi H."/>
            <person name="Shibata T."/>
            <person name="Ohta K."/>
        </authorList>
    </citation>
    <scope>NUCLEOTIDE SEQUENCE [GENOMIC DNA]</scope>
    <scope>FUNCTION</scope>
</reference>
<reference key="2">
    <citation type="journal article" date="2002" name="Nature">
        <title>The genome sequence of Schizosaccharomyces pombe.</title>
        <authorList>
            <person name="Wood V."/>
            <person name="Gwilliam R."/>
            <person name="Rajandream M.A."/>
            <person name="Lyne M.H."/>
            <person name="Lyne R."/>
            <person name="Stewart A."/>
            <person name="Sgouros J.G."/>
            <person name="Peat N."/>
            <person name="Hayles J."/>
            <person name="Baker S.G."/>
            <person name="Basham D."/>
            <person name="Bowman S."/>
            <person name="Brooks K."/>
            <person name="Brown D."/>
            <person name="Brown S."/>
            <person name="Chillingworth T."/>
            <person name="Churcher C.M."/>
            <person name="Collins M."/>
            <person name="Connor R."/>
            <person name="Cronin A."/>
            <person name="Davis P."/>
            <person name="Feltwell T."/>
            <person name="Fraser A."/>
            <person name="Gentles S."/>
            <person name="Goble A."/>
            <person name="Hamlin N."/>
            <person name="Harris D.E."/>
            <person name="Hidalgo J."/>
            <person name="Hodgson G."/>
            <person name="Holroyd S."/>
            <person name="Hornsby T."/>
            <person name="Howarth S."/>
            <person name="Huckle E.J."/>
            <person name="Hunt S."/>
            <person name="Jagels K."/>
            <person name="James K.D."/>
            <person name="Jones L."/>
            <person name="Jones M."/>
            <person name="Leather S."/>
            <person name="McDonald S."/>
            <person name="McLean J."/>
            <person name="Mooney P."/>
            <person name="Moule S."/>
            <person name="Mungall K.L."/>
            <person name="Murphy L.D."/>
            <person name="Niblett D."/>
            <person name="Odell C."/>
            <person name="Oliver K."/>
            <person name="O'Neil S."/>
            <person name="Pearson D."/>
            <person name="Quail M.A."/>
            <person name="Rabbinowitsch E."/>
            <person name="Rutherford K.M."/>
            <person name="Rutter S."/>
            <person name="Saunders D."/>
            <person name="Seeger K."/>
            <person name="Sharp S."/>
            <person name="Skelton J."/>
            <person name="Simmonds M.N."/>
            <person name="Squares R."/>
            <person name="Squares S."/>
            <person name="Stevens K."/>
            <person name="Taylor K."/>
            <person name="Taylor R.G."/>
            <person name="Tivey A."/>
            <person name="Walsh S.V."/>
            <person name="Warren T."/>
            <person name="Whitehead S."/>
            <person name="Woodward J.R."/>
            <person name="Volckaert G."/>
            <person name="Aert R."/>
            <person name="Robben J."/>
            <person name="Grymonprez B."/>
            <person name="Weltjens I."/>
            <person name="Vanstreels E."/>
            <person name="Rieger M."/>
            <person name="Schaefer M."/>
            <person name="Mueller-Auer S."/>
            <person name="Gabel C."/>
            <person name="Fuchs M."/>
            <person name="Duesterhoeft A."/>
            <person name="Fritzc C."/>
            <person name="Holzer E."/>
            <person name="Moestl D."/>
            <person name="Hilbert H."/>
            <person name="Borzym K."/>
            <person name="Langer I."/>
            <person name="Beck A."/>
            <person name="Lehrach H."/>
            <person name="Reinhardt R."/>
            <person name="Pohl T.M."/>
            <person name="Eger P."/>
            <person name="Zimmermann W."/>
            <person name="Wedler H."/>
            <person name="Wambutt R."/>
            <person name="Purnelle B."/>
            <person name="Goffeau A."/>
            <person name="Cadieu E."/>
            <person name="Dreano S."/>
            <person name="Gloux S."/>
            <person name="Lelaure V."/>
            <person name="Mottier S."/>
            <person name="Galibert F."/>
            <person name="Aves S.J."/>
            <person name="Xiang Z."/>
            <person name="Hunt C."/>
            <person name="Moore K."/>
            <person name="Hurst S.M."/>
            <person name="Lucas M."/>
            <person name="Rochet M."/>
            <person name="Gaillardin C."/>
            <person name="Tallada V.A."/>
            <person name="Garzon A."/>
            <person name="Thode G."/>
            <person name="Daga R.R."/>
            <person name="Cruzado L."/>
            <person name="Jimenez J."/>
            <person name="Sanchez M."/>
            <person name="del Rey F."/>
            <person name="Benito J."/>
            <person name="Dominguez A."/>
            <person name="Revuelta J.L."/>
            <person name="Moreno S."/>
            <person name="Armstrong J."/>
            <person name="Forsburg S.L."/>
            <person name="Cerutti L."/>
            <person name="Lowe T."/>
            <person name="McCombie W.R."/>
            <person name="Paulsen I."/>
            <person name="Potashkin J."/>
            <person name="Shpakovski G.V."/>
            <person name="Ussery D."/>
            <person name="Barrell B.G."/>
            <person name="Nurse P."/>
        </authorList>
    </citation>
    <scope>NUCLEOTIDE SEQUENCE [LARGE SCALE GENOMIC DNA]</scope>
    <source>
        <strain>972 / ATCC 24843</strain>
    </source>
</reference>
<reference key="3">
    <citation type="journal article" date="2006" name="Nat. Biotechnol.">
        <title>ORFeome cloning and global analysis of protein localization in the fission yeast Schizosaccharomyces pombe.</title>
        <authorList>
            <person name="Matsuyama A."/>
            <person name="Arai R."/>
            <person name="Yashiroda Y."/>
            <person name="Shirai A."/>
            <person name="Kamata A."/>
            <person name="Sekido S."/>
            <person name="Kobayashi Y."/>
            <person name="Hashimoto A."/>
            <person name="Hamamoto M."/>
            <person name="Hiraoka Y."/>
            <person name="Horinouchi S."/>
            <person name="Yoshida M."/>
        </authorList>
    </citation>
    <scope>SUBCELLULAR LOCATION [LARGE SCALE ANALYSIS]</scope>
</reference>
<reference key="4">
    <citation type="journal article" date="2008" name="Nat. Struct. Mol. Biol.">
        <title>Fission yeast SWI/SNF and RSC complexes show compositional and functional differences from budding yeast.</title>
        <authorList>
            <person name="Monahan B.J."/>
            <person name="Villen J."/>
            <person name="Marguerat S."/>
            <person name="Baehler J."/>
            <person name="Gygi S.P."/>
            <person name="Winston F."/>
        </authorList>
    </citation>
    <scope>IDENTIFICATION IN THE SWI/SNF COMPLEX</scope>
    <scope>FUNCTION OF THE SWI/SNF COMPLEX</scope>
    <scope>IDENTIFICATION BY MASS SPECTROMETRY</scope>
</reference>
<name>SNF22_SCHPO</name>
<proteinExistence type="evidence at protein level"/>